<protein>
    <recommendedName>
        <fullName>Transmembrane protein 33</fullName>
    </recommendedName>
    <alternativeName>
        <fullName>Protein DB83</fullName>
    </alternativeName>
</protein>
<sequence>MADTTPNGPQGAGAVQFMMTNKLDTAMWLSRLFTVYCSALFVLPLLGLHEAASFYQRALLANALTSALRLHQRLPHFQLSRAFLAQALLEDSCHYLLYSLIFVNSYPVTMSIFPVLLFSLLHAATYTKKVLDAKGSNSLPLLRSFLDKLSTNQQNILKFIACNEIFLMPATVFMLFSGQGSLLQPFIYYRFLTLRYSSRRNPYCRNLFNELRIVVEHIIMKPSCPLFVRRLCLQSIAFISRLAPTVA</sequence>
<feature type="initiator methionine" description="Removed" evidence="1">
    <location>
        <position position="1"/>
    </location>
</feature>
<feature type="chain" id="PRO_0000220900" description="Transmembrane protein 33">
    <location>
        <begin position="2"/>
        <end position="247"/>
    </location>
</feature>
<feature type="topological domain" description="Lumenal" evidence="4">
    <location>
        <begin position="2"/>
        <end position="31"/>
    </location>
</feature>
<feature type="transmembrane region" description="Helical" evidence="2">
    <location>
        <begin position="32"/>
        <end position="52"/>
    </location>
</feature>
<feature type="topological domain" description="Cytoplasmic" evidence="4">
    <location>
        <begin position="53"/>
        <end position="100"/>
    </location>
</feature>
<feature type="transmembrane region" description="Helical" evidence="2">
    <location>
        <begin position="101"/>
        <end position="121"/>
    </location>
</feature>
<feature type="topological domain" description="Lumenal" evidence="4">
    <location>
        <begin position="122"/>
        <end position="155"/>
    </location>
</feature>
<feature type="transmembrane region" description="Helical" evidence="2">
    <location>
        <begin position="156"/>
        <end position="176"/>
    </location>
</feature>
<feature type="topological domain" description="Cytoplasmic" evidence="4">
    <location>
        <begin position="177"/>
        <end position="247"/>
    </location>
</feature>
<feature type="modified residue" description="N-acetylalanine" evidence="1">
    <location>
        <position position="2"/>
    </location>
</feature>
<feature type="sequence conflict" description="In Ref. 1; BAB24078." evidence="4" ref="1">
    <original>A</original>
    <variation>T</variation>
    <location>
        <position position="39"/>
    </location>
</feature>
<feature type="sequence conflict" description="In Ref. 1; BAB30671." evidence="4" ref="1">
    <location>
        <position position="246"/>
    </location>
</feature>
<name>TMM33_MOUSE</name>
<dbReference type="EMBL" id="AK005493">
    <property type="protein sequence ID" value="BAB24078.1"/>
    <property type="molecule type" value="mRNA"/>
</dbReference>
<dbReference type="EMBL" id="AK007607">
    <property type="protein sequence ID" value="BAB25131.1"/>
    <property type="molecule type" value="mRNA"/>
</dbReference>
<dbReference type="EMBL" id="AK007750">
    <property type="protein sequence ID" value="BAB25233.1"/>
    <property type="molecule type" value="mRNA"/>
</dbReference>
<dbReference type="EMBL" id="AK017281">
    <property type="protein sequence ID" value="BAB30671.1"/>
    <property type="molecule type" value="mRNA"/>
</dbReference>
<dbReference type="EMBL" id="AK032555">
    <property type="protein sequence ID" value="BAC27922.1"/>
    <property type="molecule type" value="mRNA"/>
</dbReference>
<dbReference type="EMBL" id="AK153441">
    <property type="protein sequence ID" value="BAE31997.1"/>
    <property type="molecule type" value="mRNA"/>
</dbReference>
<dbReference type="EMBL" id="AK165369">
    <property type="protein sequence ID" value="BAE38149.1"/>
    <property type="molecule type" value="mRNA"/>
</dbReference>
<dbReference type="EMBL" id="BC005562">
    <property type="protein sequence ID" value="AAH05562.1"/>
    <property type="molecule type" value="mRNA"/>
</dbReference>
<dbReference type="EMBL" id="BC016570">
    <property type="protein sequence ID" value="AAH16570.1"/>
    <property type="molecule type" value="mRNA"/>
</dbReference>
<dbReference type="EMBL" id="BC023966">
    <property type="protein sequence ID" value="AAH23966.1"/>
    <property type="molecule type" value="mRNA"/>
</dbReference>
<dbReference type="CCDS" id="CCDS19317.1"/>
<dbReference type="RefSeq" id="NP_001272381.1">
    <property type="nucleotide sequence ID" value="NM_001285452.1"/>
</dbReference>
<dbReference type="RefSeq" id="NP_083251.2">
    <property type="nucleotide sequence ID" value="NM_028975.4"/>
</dbReference>
<dbReference type="RefSeq" id="NP_084384.1">
    <property type="nucleotide sequence ID" value="NM_030108.2"/>
</dbReference>
<dbReference type="SMR" id="Q9CR67"/>
<dbReference type="BioGRID" id="212504">
    <property type="interactions" value="13"/>
</dbReference>
<dbReference type="FunCoup" id="Q9CR67">
    <property type="interactions" value="2885"/>
</dbReference>
<dbReference type="IntAct" id="Q9CR67">
    <property type="interactions" value="2"/>
</dbReference>
<dbReference type="MINT" id="Q9CR67"/>
<dbReference type="STRING" id="10090.ENSMUSP00000042852"/>
<dbReference type="GlyGen" id="Q9CR67">
    <property type="glycosylation" value="1 site, 1 O-linked glycan (1 site)"/>
</dbReference>
<dbReference type="iPTMnet" id="Q9CR67"/>
<dbReference type="PhosphoSitePlus" id="Q9CR67"/>
<dbReference type="SwissPalm" id="Q9CR67"/>
<dbReference type="jPOST" id="Q9CR67"/>
<dbReference type="PaxDb" id="10090-ENSMUSP00000042852"/>
<dbReference type="PeptideAtlas" id="Q9CR67"/>
<dbReference type="ProteomicsDB" id="259033"/>
<dbReference type="Pumba" id="Q9CR67"/>
<dbReference type="TopDownProteomics" id="Q9CR67"/>
<dbReference type="Antibodypedia" id="60901">
    <property type="antibodies" value="89 antibodies from 19 providers"/>
</dbReference>
<dbReference type="DNASU" id="67878"/>
<dbReference type="Ensembl" id="ENSMUST00000037918.12">
    <property type="protein sequence ID" value="ENSMUSP00000042852.6"/>
    <property type="gene ID" value="ENSMUSG00000037720.17"/>
</dbReference>
<dbReference type="Ensembl" id="ENSMUST00000161369.3">
    <property type="protein sequence ID" value="ENSMUSP00000124390.2"/>
    <property type="gene ID" value="ENSMUSG00000037720.17"/>
</dbReference>
<dbReference type="GeneID" id="67878"/>
<dbReference type="KEGG" id="mmu:67878"/>
<dbReference type="UCSC" id="uc008xpp.2">
    <property type="organism name" value="mouse"/>
</dbReference>
<dbReference type="AGR" id="MGI:1915128"/>
<dbReference type="CTD" id="55161"/>
<dbReference type="MGI" id="MGI:1915128">
    <property type="gene designation" value="Tmem33"/>
</dbReference>
<dbReference type="VEuPathDB" id="HostDB:ENSMUSG00000037720"/>
<dbReference type="eggNOG" id="KOG4002">
    <property type="taxonomic scope" value="Eukaryota"/>
</dbReference>
<dbReference type="GeneTree" id="ENSGT00390000011368"/>
<dbReference type="HOGENOM" id="CLU_071391_0_0_1"/>
<dbReference type="InParanoid" id="Q9CR67"/>
<dbReference type="OMA" id="FFSIRPT"/>
<dbReference type="OrthoDB" id="5581259at2759"/>
<dbReference type="PhylomeDB" id="Q9CR67"/>
<dbReference type="TreeFam" id="TF314068"/>
<dbReference type="BioGRID-ORCS" id="67878">
    <property type="hits" value="2 hits in 76 CRISPR screens"/>
</dbReference>
<dbReference type="ChiTaRS" id="Tmem33">
    <property type="organism name" value="mouse"/>
</dbReference>
<dbReference type="PRO" id="PR:Q9CR67"/>
<dbReference type="Proteomes" id="UP000000589">
    <property type="component" value="Chromosome 5"/>
</dbReference>
<dbReference type="RNAct" id="Q9CR67">
    <property type="molecule type" value="protein"/>
</dbReference>
<dbReference type="Bgee" id="ENSMUSG00000037720">
    <property type="expression patterns" value="Expressed in choroid plexus epithelium and 260 other cell types or tissues"/>
</dbReference>
<dbReference type="ExpressionAtlas" id="Q9CR67">
    <property type="expression patterns" value="baseline and differential"/>
</dbReference>
<dbReference type="GO" id="GO:0005789">
    <property type="term" value="C:endoplasmic reticulum membrane"/>
    <property type="evidence" value="ECO:0000250"/>
    <property type="project" value="UniProtKB"/>
</dbReference>
<dbReference type="GO" id="GO:0042470">
    <property type="term" value="C:melanosome"/>
    <property type="evidence" value="ECO:0007669"/>
    <property type="project" value="UniProtKB-SubCell"/>
</dbReference>
<dbReference type="GO" id="GO:0005635">
    <property type="term" value="C:nuclear envelope"/>
    <property type="evidence" value="ECO:0007669"/>
    <property type="project" value="UniProtKB-SubCell"/>
</dbReference>
<dbReference type="GO" id="GO:0045087">
    <property type="term" value="P:innate immune response"/>
    <property type="evidence" value="ECO:0007669"/>
    <property type="project" value="UniProtKB-KW"/>
</dbReference>
<dbReference type="GO" id="GO:1903896">
    <property type="term" value="P:positive regulation of IRE1-mediated unfolded protein response"/>
    <property type="evidence" value="ECO:0000250"/>
    <property type="project" value="UniProtKB"/>
</dbReference>
<dbReference type="GO" id="GO:1903899">
    <property type="term" value="P:positive regulation of PERK-mediated unfolded protein response"/>
    <property type="evidence" value="ECO:0000250"/>
    <property type="project" value="UniProtKB"/>
</dbReference>
<dbReference type="GO" id="GO:1903371">
    <property type="term" value="P:regulation of endoplasmic reticulum tubular network organization"/>
    <property type="evidence" value="ECO:0000250"/>
    <property type="project" value="UniProtKB"/>
</dbReference>
<dbReference type="GO" id="GO:0034976">
    <property type="term" value="P:response to endoplasmic reticulum stress"/>
    <property type="evidence" value="ECO:0000250"/>
    <property type="project" value="UniProtKB"/>
</dbReference>
<dbReference type="InterPro" id="IPR051645">
    <property type="entry name" value="PER33/POM33_regulator"/>
</dbReference>
<dbReference type="InterPro" id="IPR005344">
    <property type="entry name" value="TMEM33/Pom33"/>
</dbReference>
<dbReference type="PANTHER" id="PTHR12703">
    <property type="entry name" value="TRANSMEMBRANE PROTEIN 33"/>
    <property type="match status" value="1"/>
</dbReference>
<dbReference type="PANTHER" id="PTHR12703:SF4">
    <property type="entry name" value="TRANSMEMBRANE PROTEIN 33"/>
    <property type="match status" value="1"/>
</dbReference>
<dbReference type="Pfam" id="PF03661">
    <property type="entry name" value="TMEM33_Pom33"/>
    <property type="match status" value="1"/>
</dbReference>
<evidence type="ECO:0000250" key="1">
    <source>
        <dbReference type="UniProtKB" id="P57088"/>
    </source>
</evidence>
<evidence type="ECO:0000255" key="2"/>
<evidence type="ECO:0000269" key="3">
    <source>
    </source>
</evidence>
<evidence type="ECO:0000305" key="4"/>
<proteinExistence type="evidence at protein level"/>
<accession>Q9CR67</accession>
<accession>Q544Q3</accession>
<accession>Q9D3M3</accession>
<accession>Q9DAV4</accession>
<organism>
    <name type="scientific">Mus musculus</name>
    <name type="common">Mouse</name>
    <dbReference type="NCBI Taxonomy" id="10090"/>
    <lineage>
        <taxon>Eukaryota</taxon>
        <taxon>Metazoa</taxon>
        <taxon>Chordata</taxon>
        <taxon>Craniata</taxon>
        <taxon>Vertebrata</taxon>
        <taxon>Euteleostomi</taxon>
        <taxon>Mammalia</taxon>
        <taxon>Eutheria</taxon>
        <taxon>Euarchontoglires</taxon>
        <taxon>Glires</taxon>
        <taxon>Rodentia</taxon>
        <taxon>Myomorpha</taxon>
        <taxon>Muroidea</taxon>
        <taxon>Muridae</taxon>
        <taxon>Murinae</taxon>
        <taxon>Mus</taxon>
        <taxon>Mus</taxon>
    </lineage>
</organism>
<comment type="function">
    <text evidence="1 3">Acts as a regulator of the tubular endoplasmic reticulum (ER) network by modulating intracellular calcium homeostasis. Mechanistically, stimulates PKD2 calcium-dependent activity (PubMed:31048699). Suppresses the RTN3/4-induced formation of the ER tubules. Positively regulates PERK-mediated and IRE1-mediated unfolded protein response signaling. Plays an essential role in VEGF-mediated release of Ca(2+) from ER stores during angiogenesis. Also plays a role in the modulation of innate immune signaling through the cGAS-STING pathway by interacting with RNF26. Participates in lipid metabolism by acting as a downstream effector of the pyruvate kinase/PKM. Forms a complex with RNF5 to facilitate polyubiquitination and subsequent degradation of SCAP on the ER membrane (By similarity).</text>
</comment>
<comment type="subunit">
    <text evidence="1 3">Interacts with EIF2AK3 (By similarity). Interacts with RTN1, RTN2, RTN3, RTN4 and ARL6IP1 (By similarity). Interacts with RNF5. Interacts with RNF26 (By similarity). Interacts with PKD2 (PubMed:31048699).</text>
</comment>
<comment type="subcellular location">
    <subcellularLocation>
        <location evidence="3">Endoplasmic reticulum membrane</location>
        <topology evidence="2">Multi-pass membrane protein</topology>
    </subcellularLocation>
    <subcellularLocation>
        <location evidence="1">Melanosome</location>
    </subcellularLocation>
    <subcellularLocation>
        <location evidence="1">Nucleus envelope</location>
    </subcellularLocation>
    <text evidence="1">Co-localizes with RTN4 at the ER sheets.</text>
</comment>
<comment type="disruption phenotype">
    <text evidence="3">Deletion mice show renal protection against acute kidney injury (AKI).</text>
</comment>
<comment type="similarity">
    <text evidence="4">Belongs to the PER33/POM33 family.</text>
</comment>
<reference key="1">
    <citation type="journal article" date="2005" name="Science">
        <title>The transcriptional landscape of the mammalian genome.</title>
        <authorList>
            <person name="Carninci P."/>
            <person name="Kasukawa T."/>
            <person name="Katayama S."/>
            <person name="Gough J."/>
            <person name="Frith M.C."/>
            <person name="Maeda N."/>
            <person name="Oyama R."/>
            <person name="Ravasi T."/>
            <person name="Lenhard B."/>
            <person name="Wells C."/>
            <person name="Kodzius R."/>
            <person name="Shimokawa K."/>
            <person name="Bajic V.B."/>
            <person name="Brenner S.E."/>
            <person name="Batalov S."/>
            <person name="Forrest A.R."/>
            <person name="Zavolan M."/>
            <person name="Davis M.J."/>
            <person name="Wilming L.G."/>
            <person name="Aidinis V."/>
            <person name="Allen J.E."/>
            <person name="Ambesi-Impiombato A."/>
            <person name="Apweiler R."/>
            <person name="Aturaliya R.N."/>
            <person name="Bailey T.L."/>
            <person name="Bansal M."/>
            <person name="Baxter L."/>
            <person name="Beisel K.W."/>
            <person name="Bersano T."/>
            <person name="Bono H."/>
            <person name="Chalk A.M."/>
            <person name="Chiu K.P."/>
            <person name="Choudhary V."/>
            <person name="Christoffels A."/>
            <person name="Clutterbuck D.R."/>
            <person name="Crowe M.L."/>
            <person name="Dalla E."/>
            <person name="Dalrymple B.P."/>
            <person name="de Bono B."/>
            <person name="Della Gatta G."/>
            <person name="di Bernardo D."/>
            <person name="Down T."/>
            <person name="Engstrom P."/>
            <person name="Fagiolini M."/>
            <person name="Faulkner G."/>
            <person name="Fletcher C.F."/>
            <person name="Fukushima T."/>
            <person name="Furuno M."/>
            <person name="Futaki S."/>
            <person name="Gariboldi M."/>
            <person name="Georgii-Hemming P."/>
            <person name="Gingeras T.R."/>
            <person name="Gojobori T."/>
            <person name="Green R.E."/>
            <person name="Gustincich S."/>
            <person name="Harbers M."/>
            <person name="Hayashi Y."/>
            <person name="Hensch T.K."/>
            <person name="Hirokawa N."/>
            <person name="Hill D."/>
            <person name="Huminiecki L."/>
            <person name="Iacono M."/>
            <person name="Ikeo K."/>
            <person name="Iwama A."/>
            <person name="Ishikawa T."/>
            <person name="Jakt M."/>
            <person name="Kanapin A."/>
            <person name="Katoh M."/>
            <person name="Kawasawa Y."/>
            <person name="Kelso J."/>
            <person name="Kitamura H."/>
            <person name="Kitano H."/>
            <person name="Kollias G."/>
            <person name="Krishnan S.P."/>
            <person name="Kruger A."/>
            <person name="Kummerfeld S.K."/>
            <person name="Kurochkin I.V."/>
            <person name="Lareau L.F."/>
            <person name="Lazarevic D."/>
            <person name="Lipovich L."/>
            <person name="Liu J."/>
            <person name="Liuni S."/>
            <person name="McWilliam S."/>
            <person name="Madan Babu M."/>
            <person name="Madera M."/>
            <person name="Marchionni L."/>
            <person name="Matsuda H."/>
            <person name="Matsuzawa S."/>
            <person name="Miki H."/>
            <person name="Mignone F."/>
            <person name="Miyake S."/>
            <person name="Morris K."/>
            <person name="Mottagui-Tabar S."/>
            <person name="Mulder N."/>
            <person name="Nakano N."/>
            <person name="Nakauchi H."/>
            <person name="Ng P."/>
            <person name="Nilsson R."/>
            <person name="Nishiguchi S."/>
            <person name="Nishikawa S."/>
            <person name="Nori F."/>
            <person name="Ohara O."/>
            <person name="Okazaki Y."/>
            <person name="Orlando V."/>
            <person name="Pang K.C."/>
            <person name="Pavan W.J."/>
            <person name="Pavesi G."/>
            <person name="Pesole G."/>
            <person name="Petrovsky N."/>
            <person name="Piazza S."/>
            <person name="Reed J."/>
            <person name="Reid J.F."/>
            <person name="Ring B.Z."/>
            <person name="Ringwald M."/>
            <person name="Rost B."/>
            <person name="Ruan Y."/>
            <person name="Salzberg S.L."/>
            <person name="Sandelin A."/>
            <person name="Schneider C."/>
            <person name="Schoenbach C."/>
            <person name="Sekiguchi K."/>
            <person name="Semple C.A."/>
            <person name="Seno S."/>
            <person name="Sessa L."/>
            <person name="Sheng Y."/>
            <person name="Shibata Y."/>
            <person name="Shimada H."/>
            <person name="Shimada K."/>
            <person name="Silva D."/>
            <person name="Sinclair B."/>
            <person name="Sperling S."/>
            <person name="Stupka E."/>
            <person name="Sugiura K."/>
            <person name="Sultana R."/>
            <person name="Takenaka Y."/>
            <person name="Taki K."/>
            <person name="Tammoja K."/>
            <person name="Tan S.L."/>
            <person name="Tang S."/>
            <person name="Taylor M.S."/>
            <person name="Tegner J."/>
            <person name="Teichmann S.A."/>
            <person name="Ueda H.R."/>
            <person name="van Nimwegen E."/>
            <person name="Verardo R."/>
            <person name="Wei C.L."/>
            <person name="Yagi K."/>
            <person name="Yamanishi H."/>
            <person name="Zabarovsky E."/>
            <person name="Zhu S."/>
            <person name="Zimmer A."/>
            <person name="Hide W."/>
            <person name="Bult C."/>
            <person name="Grimmond S.M."/>
            <person name="Teasdale R.D."/>
            <person name="Liu E.T."/>
            <person name="Brusic V."/>
            <person name="Quackenbush J."/>
            <person name="Wahlestedt C."/>
            <person name="Mattick J.S."/>
            <person name="Hume D.A."/>
            <person name="Kai C."/>
            <person name="Sasaki D."/>
            <person name="Tomaru Y."/>
            <person name="Fukuda S."/>
            <person name="Kanamori-Katayama M."/>
            <person name="Suzuki M."/>
            <person name="Aoki J."/>
            <person name="Arakawa T."/>
            <person name="Iida J."/>
            <person name="Imamura K."/>
            <person name="Itoh M."/>
            <person name="Kato T."/>
            <person name="Kawaji H."/>
            <person name="Kawagashira N."/>
            <person name="Kawashima T."/>
            <person name="Kojima M."/>
            <person name="Kondo S."/>
            <person name="Konno H."/>
            <person name="Nakano K."/>
            <person name="Ninomiya N."/>
            <person name="Nishio T."/>
            <person name="Okada M."/>
            <person name="Plessy C."/>
            <person name="Shibata K."/>
            <person name="Shiraki T."/>
            <person name="Suzuki S."/>
            <person name="Tagami M."/>
            <person name="Waki K."/>
            <person name="Watahiki A."/>
            <person name="Okamura-Oho Y."/>
            <person name="Suzuki H."/>
            <person name="Kawai J."/>
            <person name="Hayashizaki Y."/>
        </authorList>
    </citation>
    <scope>NUCLEOTIDE SEQUENCE [LARGE SCALE MRNA]</scope>
    <source>
        <strain>C57BL/6J</strain>
        <tissue>Bone marrow</tissue>
        <tissue>Brain</tissue>
        <tissue>Head</tissue>
        <tissue>Pancreas</tissue>
        <tissue>Placenta</tissue>
        <tissue>Spleen</tissue>
    </source>
</reference>
<reference key="2">
    <citation type="journal article" date="2004" name="Genome Res.">
        <title>The status, quality, and expansion of the NIH full-length cDNA project: the Mammalian Gene Collection (MGC).</title>
        <authorList>
            <consortium name="The MGC Project Team"/>
        </authorList>
    </citation>
    <scope>NUCLEOTIDE SEQUENCE [LARGE SCALE MRNA]</scope>
    <source>
        <strain>FVB/N</strain>
        <tissue>Mammary gland</tissue>
    </source>
</reference>
<reference key="3">
    <citation type="journal article" date="2010" name="Cell">
        <title>A tissue-specific atlas of mouse protein phosphorylation and expression.</title>
        <authorList>
            <person name="Huttlin E.L."/>
            <person name="Jedrychowski M.P."/>
            <person name="Elias J.E."/>
            <person name="Goswami T."/>
            <person name="Rad R."/>
            <person name="Beausoleil S.A."/>
            <person name="Villen J."/>
            <person name="Haas W."/>
            <person name="Sowa M.E."/>
            <person name="Gygi S.P."/>
        </authorList>
    </citation>
    <scope>IDENTIFICATION BY MASS SPECTROMETRY [LARGE SCALE ANALYSIS]</scope>
    <source>
        <tissue>Brain</tissue>
        <tissue>Brown adipose tissue</tissue>
        <tissue>Heart</tissue>
        <tissue>Kidney</tissue>
        <tissue>Liver</tissue>
        <tissue>Lung</tissue>
        <tissue>Pancreas</tissue>
        <tissue>Spleen</tissue>
        <tissue>Testis</tissue>
    </source>
</reference>
<reference key="4">
    <citation type="journal article" date="2019" name="Nat. Commun.">
        <title>TMEM33 regulates intracellular calcium homeostasis in renal tubular epithelial cells.</title>
        <authorList>
            <person name="Arhatte M."/>
            <person name="Gunaratne G.S."/>
            <person name="El Boustany C."/>
            <person name="Kuo I.Y."/>
            <person name="Moro C."/>
            <person name="Duprat F."/>
            <person name="Plaisant M."/>
            <person name="Duval H."/>
            <person name="Li D."/>
            <person name="Picard N."/>
            <person name="Couvreux A."/>
            <person name="Duranton C."/>
            <person name="Rubera I."/>
            <person name="Pagnotta S."/>
            <person name="Lacas-Gervais S."/>
            <person name="Ehrlich B.E."/>
            <person name="Marchant J.S."/>
            <person name="Savage A.M."/>
            <person name="van Eeden F.J.M."/>
            <person name="Wilkinson R.N."/>
            <person name="Demolombe S."/>
            <person name="Honore E."/>
            <person name="Patel A."/>
        </authorList>
    </citation>
    <scope>FUNCTION</scope>
    <scope>INTERACTION WITH PKD2</scope>
    <scope>DISRUPTION PHENOTYPE</scope>
    <scope>SUBCELLULAR LOCATION</scope>
</reference>
<gene>
    <name type="primary">Tmem33</name>
    <name type="synonym">Db83</name>
</gene>
<keyword id="KW-0007">Acetylation</keyword>
<keyword id="KW-0256">Endoplasmic reticulum</keyword>
<keyword id="KW-0391">Immunity</keyword>
<keyword id="KW-0399">Innate immunity</keyword>
<keyword id="KW-0472">Membrane</keyword>
<keyword id="KW-0539">Nucleus</keyword>
<keyword id="KW-1185">Reference proteome</keyword>
<keyword id="KW-0812">Transmembrane</keyword>
<keyword id="KW-1133">Transmembrane helix</keyword>